<organism>
    <name type="scientific">Oryza sativa subsp. japonica</name>
    <name type="common">Rice</name>
    <dbReference type="NCBI Taxonomy" id="39947"/>
    <lineage>
        <taxon>Eukaryota</taxon>
        <taxon>Viridiplantae</taxon>
        <taxon>Streptophyta</taxon>
        <taxon>Embryophyta</taxon>
        <taxon>Tracheophyta</taxon>
        <taxon>Spermatophyta</taxon>
        <taxon>Magnoliopsida</taxon>
        <taxon>Liliopsida</taxon>
        <taxon>Poales</taxon>
        <taxon>Poaceae</taxon>
        <taxon>BOP clade</taxon>
        <taxon>Oryzoideae</taxon>
        <taxon>Oryzeae</taxon>
        <taxon>Oryzinae</taxon>
        <taxon>Oryza</taxon>
        <taxon>Oryza sativa</taxon>
    </lineage>
</organism>
<feature type="signal peptide" evidence="2">
    <location>
        <begin position="1"/>
        <end position="26"/>
    </location>
</feature>
<feature type="chain" id="PRO_5007214320" description="Alpha-amylase/trypsin inhibitor RA16">
    <location>
        <begin position="27"/>
        <end position="157"/>
    </location>
</feature>
<feature type="disulfide bond" evidence="1">
    <location>
        <begin position="41"/>
        <end position="89"/>
    </location>
</feature>
<feature type="disulfide bond" evidence="1">
    <location>
        <begin position="55"/>
        <end position="77"/>
    </location>
</feature>
<feature type="disulfide bond" evidence="1">
    <location>
        <begin position="63"/>
        <end position="121"/>
    </location>
</feature>
<feature type="disulfide bond" evidence="1">
    <location>
        <begin position="78"/>
        <end position="137"/>
    </location>
</feature>
<feature type="disulfide bond" evidence="1">
    <location>
        <begin position="91"/>
        <end position="149"/>
    </location>
</feature>
<feature type="sequence conflict" description="In Ref. 1; BAA07712." evidence="4" ref="1">
    <original>S</original>
    <variation>P</variation>
    <location>
        <position position="9"/>
    </location>
</feature>
<feature type="sequence conflict" description="In Ref. 1; BAA07712." evidence="4" ref="1">
    <original>V</original>
    <variation>L</variation>
    <location>
        <position position="69"/>
    </location>
</feature>
<feature type="sequence conflict" description="In Ref. 1; BAA07712." evidence="4" ref="1">
    <original>A</original>
    <variation>G</variation>
    <location>
        <position position="83"/>
    </location>
</feature>
<feature type="sequence conflict" description="In Ref. 1; BAA07712." evidence="4" ref="1">
    <original>SG</original>
    <variation>ER</variation>
    <location>
        <begin position="105"/>
        <end position="106"/>
    </location>
</feature>
<gene>
    <name evidence="4" type="primary">RA16</name>
    <name evidence="6" type="ordered locus">Os07g0214600</name>
    <name evidence="5" type="ORF">OJ1116_C08.118</name>
</gene>
<name>RA16_ORYSJ</name>
<accession>Q8H4L8</accession>
<accession>Q40654</accession>
<dbReference type="EMBL" id="D42141">
    <property type="protein sequence ID" value="BAA07712.1"/>
    <property type="molecule type" value="mRNA"/>
</dbReference>
<dbReference type="EMBL" id="AP004002">
    <property type="protein sequence ID" value="BAC20657.1"/>
    <property type="molecule type" value="Genomic_DNA"/>
</dbReference>
<dbReference type="EMBL" id="AP008213">
    <property type="protein sequence ID" value="BAF21100.1"/>
    <property type="molecule type" value="Genomic_DNA"/>
</dbReference>
<dbReference type="EMBL" id="AP014963">
    <property type="protein sequence ID" value="BAT00620.1"/>
    <property type="molecule type" value="Genomic_DNA"/>
</dbReference>
<dbReference type="PIR" id="S59924">
    <property type="entry name" value="S59924"/>
</dbReference>
<dbReference type="RefSeq" id="XP_015645223.1">
    <property type="nucleotide sequence ID" value="XM_015789737.1"/>
</dbReference>
<dbReference type="SMR" id="Q8H4L8"/>
<dbReference type="FunCoup" id="Q8H4L8">
    <property type="interactions" value="169"/>
</dbReference>
<dbReference type="STRING" id="39947.Q8H4L8"/>
<dbReference type="Allergome" id="1049">
    <property type="allergen name" value="Ory s aA_TI"/>
</dbReference>
<dbReference type="PaxDb" id="39947-Q8H4L8"/>
<dbReference type="EnsemblPlants" id="Os07t0214600-01">
    <property type="protein sequence ID" value="Os07t0214600-01"/>
    <property type="gene ID" value="Os07g0214600"/>
</dbReference>
<dbReference type="Gramene" id="Os07t0214600-01">
    <property type="protein sequence ID" value="Os07t0214600-01"/>
    <property type="gene ID" value="Os07g0214600"/>
</dbReference>
<dbReference type="KEGG" id="dosa:Os07g0214600"/>
<dbReference type="eggNOG" id="ENOG502R43K">
    <property type="taxonomic scope" value="Eukaryota"/>
</dbReference>
<dbReference type="HOGENOM" id="CLU_140628_0_0_1"/>
<dbReference type="InParanoid" id="Q8H4L8"/>
<dbReference type="OrthoDB" id="10286758at2759"/>
<dbReference type="Proteomes" id="UP000000763">
    <property type="component" value="Chromosome 7"/>
</dbReference>
<dbReference type="Proteomes" id="UP000059680">
    <property type="component" value="Chromosome 7"/>
</dbReference>
<dbReference type="GO" id="GO:0005576">
    <property type="term" value="C:extracellular region"/>
    <property type="evidence" value="ECO:0007669"/>
    <property type="project" value="UniProtKB-SubCell"/>
</dbReference>
<dbReference type="GO" id="GO:0019863">
    <property type="term" value="F:IgE binding"/>
    <property type="evidence" value="ECO:0000314"/>
    <property type="project" value="UniProtKB"/>
</dbReference>
<dbReference type="GO" id="GO:0045735">
    <property type="term" value="F:nutrient reservoir activity"/>
    <property type="evidence" value="ECO:0007669"/>
    <property type="project" value="UniProtKB-KW"/>
</dbReference>
<dbReference type="GO" id="GO:0004867">
    <property type="term" value="F:serine-type endopeptidase inhibitor activity"/>
    <property type="evidence" value="ECO:0007669"/>
    <property type="project" value="InterPro"/>
</dbReference>
<dbReference type="CDD" id="cd00261">
    <property type="entry name" value="AAI_SS"/>
    <property type="match status" value="1"/>
</dbReference>
<dbReference type="FunFam" id="1.10.110.10:FF:000004">
    <property type="entry name" value="Alpha-amylase inhibitor 0.19"/>
    <property type="match status" value="1"/>
</dbReference>
<dbReference type="Gene3D" id="1.10.110.10">
    <property type="entry name" value="Plant lipid-transfer and hydrophobic proteins"/>
    <property type="match status" value="1"/>
</dbReference>
<dbReference type="InterPro" id="IPR002411">
    <property type="entry name" value="Allergen/amylase_inhib_rice"/>
</dbReference>
<dbReference type="InterPro" id="IPR006106">
    <property type="entry name" value="Allergen/soft/tryp_amyl_inhib"/>
</dbReference>
<dbReference type="InterPro" id="IPR006105">
    <property type="entry name" value="Allergen/tryp_amyl_inhib_CS"/>
</dbReference>
<dbReference type="InterPro" id="IPR036312">
    <property type="entry name" value="Bifun_inhib/LTP/seed_sf"/>
</dbReference>
<dbReference type="InterPro" id="IPR016140">
    <property type="entry name" value="Bifunc_inhib/LTP/seed_store"/>
</dbReference>
<dbReference type="PANTHER" id="PTHR34481:SF8">
    <property type="entry name" value="SEED ALLERGENIC PROTEIN RAG1"/>
    <property type="match status" value="1"/>
</dbReference>
<dbReference type="PANTHER" id="PTHR34481">
    <property type="entry name" value="TRYPSIN/FACTOR XIIA INHIBITOR-RELATED"/>
    <property type="match status" value="1"/>
</dbReference>
<dbReference type="Pfam" id="PF00234">
    <property type="entry name" value="Tryp_alpha_amyl"/>
    <property type="match status" value="1"/>
</dbReference>
<dbReference type="PIRSF" id="PIRSF001657">
    <property type="entry name" value="Allergen/amylase_inhib"/>
    <property type="match status" value="1"/>
</dbReference>
<dbReference type="PRINTS" id="PR00808">
    <property type="entry name" value="AMLASEINHBTR"/>
</dbReference>
<dbReference type="PRINTS" id="PR00809">
    <property type="entry name" value="RAGALLERGEN"/>
</dbReference>
<dbReference type="SMART" id="SM00499">
    <property type="entry name" value="AAI"/>
    <property type="match status" value="1"/>
</dbReference>
<dbReference type="SUPFAM" id="SSF47699">
    <property type="entry name" value="Bifunctional inhibitor/lipid-transfer protein/seed storage 2S albumin"/>
    <property type="match status" value="1"/>
</dbReference>
<dbReference type="PROSITE" id="PS00426">
    <property type="entry name" value="CEREAL_TRYP_AMYL_INH"/>
    <property type="match status" value="1"/>
</dbReference>
<comment type="function">
    <text evidence="4">Seed storage protein.</text>
</comment>
<comment type="subcellular location">
    <subcellularLocation>
        <location evidence="4">Secreted</location>
    </subcellularLocation>
</comment>
<comment type="PTM">
    <text evidence="1">Five disulfide bonds are present.</text>
</comment>
<comment type="allergen">
    <text evidence="3">Causes an allergic reaction in human. Binds to IgE.</text>
</comment>
<comment type="similarity">
    <text evidence="4">Belongs to the cereal trypsin/alpha-amylase inhibitor family.</text>
</comment>
<reference key="1">
    <citation type="journal article" date="1995" name="Biochim. Biophys. Acta">
        <title>Classification of rice allergenic protein cDNAs belonging to the alpha-amylase/trypsin inhibitor gene family.</title>
        <authorList>
            <person name="Alvarez A.M."/>
            <person name="Adachi T."/>
            <person name="Nakase M."/>
            <person name="Aoki N."/>
            <person name="Nakamura R."/>
            <person name="Matsuda T."/>
        </authorList>
    </citation>
    <scope>NUCLEOTIDE SEQUENCE [MRNA]</scope>
    <source>
        <strain>cv. Nipponbare</strain>
        <tissue>Endosperm</tissue>
    </source>
</reference>
<reference key="2">
    <citation type="journal article" date="2005" name="Nature">
        <title>The map-based sequence of the rice genome.</title>
        <authorList>
            <consortium name="International rice genome sequencing project (IRGSP)"/>
        </authorList>
    </citation>
    <scope>NUCLEOTIDE SEQUENCE [LARGE SCALE GENOMIC DNA]</scope>
    <source>
        <strain>cv. Nipponbare</strain>
    </source>
</reference>
<reference key="3">
    <citation type="journal article" date="2008" name="Nucleic Acids Res.">
        <title>The rice annotation project database (RAP-DB): 2008 update.</title>
        <authorList>
            <consortium name="The rice annotation project (RAP)"/>
        </authorList>
    </citation>
    <scope>GENOME REANNOTATION</scope>
    <source>
        <strain>cv. Nipponbare</strain>
    </source>
</reference>
<reference key="4">
    <citation type="journal article" date="2013" name="Rice">
        <title>Improvement of the Oryza sativa Nipponbare reference genome using next generation sequence and optical map data.</title>
        <authorList>
            <person name="Kawahara Y."/>
            <person name="de la Bastide M."/>
            <person name="Hamilton J.P."/>
            <person name="Kanamori H."/>
            <person name="McCombie W.R."/>
            <person name="Ouyang S."/>
            <person name="Schwartz D.C."/>
            <person name="Tanaka T."/>
            <person name="Wu J."/>
            <person name="Zhou S."/>
            <person name="Childs K.L."/>
            <person name="Davidson R.M."/>
            <person name="Lin H."/>
            <person name="Quesada-Ocampo L."/>
            <person name="Vaillancourt B."/>
            <person name="Sakai H."/>
            <person name="Lee S.S."/>
            <person name="Kim J."/>
            <person name="Numa H."/>
            <person name="Itoh T."/>
            <person name="Buell C.R."/>
            <person name="Matsumoto T."/>
        </authorList>
    </citation>
    <scope>GENOME REANNOTATION</scope>
    <source>
        <strain>cv. Nipponbare</strain>
    </source>
</reference>
<reference key="5">
    <citation type="journal article" date="2013" name="J. Proteome Res.">
        <title>MucoRice-cholera toxin B-subunit, a rice-based oral cholera vaccine, down-regulates the expression of alpha-amylase/trypsin inhibitor-like protein family as major rice allergens.</title>
        <authorList>
            <person name="Kurokawa S."/>
            <person name="Nakamura R."/>
            <person name="Mejima M."/>
            <person name="Kozuka-Hata H."/>
            <person name="Kuroda M."/>
            <person name="Takeyama N."/>
            <person name="Oyama M."/>
            <person name="Satoh S."/>
            <person name="Kiyono H."/>
            <person name="Masumura T."/>
            <person name="Teshima R."/>
            <person name="Yuki Y."/>
        </authorList>
    </citation>
    <scope>IDENTIFICATION BY MASS SPECTROMETRY</scope>
    <scope>ALLERGEN</scope>
</reference>
<proteinExistence type="evidence at protein level"/>
<keyword id="KW-0020">Allergen</keyword>
<keyword id="KW-1015">Disulfide bond</keyword>
<keyword id="KW-1185">Reference proteome</keyword>
<keyword id="KW-0964">Secreted</keyword>
<keyword id="KW-0708">Seed storage protein</keyword>
<keyword id="KW-0732">Signal</keyword>
<keyword id="KW-0758">Storage protein</keyword>
<evidence type="ECO:0000250" key="1">
    <source>
        <dbReference type="UniProtKB" id="Q01883"/>
    </source>
</evidence>
<evidence type="ECO:0000255" key="2"/>
<evidence type="ECO:0000269" key="3">
    <source>
    </source>
</evidence>
<evidence type="ECO:0000305" key="4"/>
<evidence type="ECO:0000312" key="5">
    <source>
        <dbReference type="EMBL" id="BAC20657.1"/>
    </source>
</evidence>
<evidence type="ECO:0000312" key="6">
    <source>
        <dbReference type="EMBL" id="BAF21100.1"/>
    </source>
</evidence>
<protein>
    <recommendedName>
        <fullName evidence="4">Alpha-amylase/trypsin inhibitor RA16</fullName>
    </recommendedName>
    <alternativeName>
        <fullName evidence="4">Allergen RA16</fullName>
    </alternativeName>
    <allergenName>Ory s aA_TI</allergenName>
</protein>
<sequence>MASNKVVISALLVVVVSVLAATTTMADHHQEQVVYTPGQLCQPGIGYPTYPLPRCRAFVKRQCVAPGTVDEQVRRGCCRQLAAIDSSWCRCDALNHMLRIIYRESGAADAGHPMAEVFRGCRRGDIERAAASLPAFCNVDIPNGVGGVCYWLPGTGY</sequence>